<reference key="1">
    <citation type="journal article" date="2004" name="Nat. Biotechnol.">
        <title>Complete sequence and comparative genome analysis of the dairy bacterium Streptococcus thermophilus.</title>
        <authorList>
            <person name="Bolotin A."/>
            <person name="Quinquis B."/>
            <person name="Renault P."/>
            <person name="Sorokin A."/>
            <person name="Ehrlich S.D."/>
            <person name="Kulakauskas S."/>
            <person name="Lapidus A."/>
            <person name="Goltsman E."/>
            <person name="Mazur M."/>
            <person name="Pusch G.D."/>
            <person name="Fonstein M."/>
            <person name="Overbeek R."/>
            <person name="Kyprides N."/>
            <person name="Purnelle B."/>
            <person name="Prozzi D."/>
            <person name="Ngui K."/>
            <person name="Masuy D."/>
            <person name="Hancy F."/>
            <person name="Burteau S."/>
            <person name="Boutry M."/>
            <person name="Delcour J."/>
            <person name="Goffeau A."/>
            <person name="Hols P."/>
        </authorList>
    </citation>
    <scope>NUCLEOTIDE SEQUENCE [LARGE SCALE GENOMIC DNA]</scope>
    <source>
        <strain>ATCC BAA-250 / LMG 18311</strain>
    </source>
</reference>
<feature type="chain" id="PRO_0000238099" description="33 kDa chaperonin">
    <location>
        <begin position="1"/>
        <end position="288"/>
    </location>
</feature>
<feature type="disulfide bond" description="Redox-active" evidence="1">
    <location>
        <begin position="235"/>
        <end position="237"/>
    </location>
</feature>
<feature type="disulfide bond" description="Redox-active" evidence="1">
    <location>
        <begin position="268"/>
        <end position="271"/>
    </location>
</feature>
<protein>
    <recommendedName>
        <fullName evidence="1">33 kDa chaperonin</fullName>
    </recommendedName>
    <alternativeName>
        <fullName evidence="1">Heat shock protein 33 homolog</fullName>
        <shortName evidence="1">HSP33</shortName>
    </alternativeName>
</protein>
<sequence>MDKLIKTISESGSFRAYALDSTETVRTAQEKHNTLSSSTVALGRTLIANQILAANQKGDSKITVKVIGNGSFGHIISVADTKGHVKGYIQNPGVDIKKTATGEVLVGPFMGHGQFVSIIDYGTGNPYTSSTPLISGEIGEDFAYYLTESEQTPSAVGLNVLLDKEDKVKVAGGFMLQVLPGASEEEIARYEKRIQEMPAISTLLESDDHIEALLNAIYGDEPFKRLSEEELSFECDCSRERFENALLTLGKDELQAMKDEDHGAEIVCQFCQTKYEFSEADLEELIND</sequence>
<gene>
    <name evidence="1" type="primary">hslO</name>
    <name type="ordered locus">stu0180</name>
</gene>
<organism>
    <name type="scientific">Streptococcus thermophilus (strain ATCC BAA-250 / LMG 18311)</name>
    <dbReference type="NCBI Taxonomy" id="264199"/>
    <lineage>
        <taxon>Bacteria</taxon>
        <taxon>Bacillati</taxon>
        <taxon>Bacillota</taxon>
        <taxon>Bacilli</taxon>
        <taxon>Lactobacillales</taxon>
        <taxon>Streptococcaceae</taxon>
        <taxon>Streptococcus</taxon>
    </lineage>
</organism>
<accession>Q5M690</accession>
<comment type="function">
    <text evidence="1">Redox regulated molecular chaperone. Protects both thermally unfolding and oxidatively damaged proteins from irreversible aggregation. Plays an important role in the bacterial defense system toward oxidative stress.</text>
</comment>
<comment type="subcellular location">
    <subcellularLocation>
        <location evidence="1">Cytoplasm</location>
    </subcellularLocation>
</comment>
<comment type="PTM">
    <text evidence="1">Under oxidizing conditions two disulfide bonds are formed involving the reactive cysteines. Under reducing conditions zinc is bound to the reactive cysteines and the protein is inactive.</text>
</comment>
<comment type="similarity">
    <text evidence="1">Belongs to the HSP33 family.</text>
</comment>
<comment type="sequence caution" evidence="2">
    <conflict type="erroneous initiation">
        <sequence resource="EMBL-CDS" id="AAV59905"/>
    </conflict>
</comment>
<evidence type="ECO:0000255" key="1">
    <source>
        <dbReference type="HAMAP-Rule" id="MF_00117"/>
    </source>
</evidence>
<evidence type="ECO:0000305" key="2"/>
<name>HSLO_STRT2</name>
<dbReference type="EMBL" id="CP000023">
    <property type="protein sequence ID" value="AAV59905.1"/>
    <property type="status" value="ALT_INIT"/>
    <property type="molecule type" value="Genomic_DNA"/>
</dbReference>
<dbReference type="RefSeq" id="WP_041828113.1">
    <property type="nucleotide sequence ID" value="NC_006448.1"/>
</dbReference>
<dbReference type="SMR" id="Q5M690"/>
<dbReference type="STRING" id="264199.stu0180"/>
<dbReference type="GeneID" id="66898119"/>
<dbReference type="KEGG" id="stl:stu0180"/>
<dbReference type="PATRIC" id="fig|264199.4.peg.187"/>
<dbReference type="eggNOG" id="COG1281">
    <property type="taxonomic scope" value="Bacteria"/>
</dbReference>
<dbReference type="HOGENOM" id="CLU_054493_1_0_9"/>
<dbReference type="Proteomes" id="UP000001170">
    <property type="component" value="Chromosome"/>
</dbReference>
<dbReference type="GO" id="GO:0005737">
    <property type="term" value="C:cytoplasm"/>
    <property type="evidence" value="ECO:0007669"/>
    <property type="project" value="UniProtKB-SubCell"/>
</dbReference>
<dbReference type="GO" id="GO:0044183">
    <property type="term" value="F:protein folding chaperone"/>
    <property type="evidence" value="ECO:0007669"/>
    <property type="project" value="TreeGrafter"/>
</dbReference>
<dbReference type="GO" id="GO:0051082">
    <property type="term" value="F:unfolded protein binding"/>
    <property type="evidence" value="ECO:0007669"/>
    <property type="project" value="UniProtKB-UniRule"/>
</dbReference>
<dbReference type="GO" id="GO:0042026">
    <property type="term" value="P:protein refolding"/>
    <property type="evidence" value="ECO:0007669"/>
    <property type="project" value="TreeGrafter"/>
</dbReference>
<dbReference type="CDD" id="cd00498">
    <property type="entry name" value="Hsp33"/>
    <property type="match status" value="1"/>
</dbReference>
<dbReference type="Gene3D" id="3.55.30.10">
    <property type="entry name" value="Hsp33 domain"/>
    <property type="match status" value="1"/>
</dbReference>
<dbReference type="Gene3D" id="3.90.1280.10">
    <property type="entry name" value="HSP33 redox switch-like"/>
    <property type="match status" value="1"/>
</dbReference>
<dbReference type="HAMAP" id="MF_00117">
    <property type="entry name" value="HslO"/>
    <property type="match status" value="1"/>
</dbReference>
<dbReference type="InterPro" id="IPR000397">
    <property type="entry name" value="Heat_shock_Hsp33"/>
</dbReference>
<dbReference type="InterPro" id="IPR016154">
    <property type="entry name" value="Heat_shock_Hsp33_C"/>
</dbReference>
<dbReference type="InterPro" id="IPR016153">
    <property type="entry name" value="Heat_shock_Hsp33_N"/>
</dbReference>
<dbReference type="NCBIfam" id="NF001033">
    <property type="entry name" value="PRK00114.1"/>
    <property type="match status" value="1"/>
</dbReference>
<dbReference type="PANTHER" id="PTHR30111">
    <property type="entry name" value="33 KDA CHAPERONIN"/>
    <property type="match status" value="1"/>
</dbReference>
<dbReference type="PANTHER" id="PTHR30111:SF1">
    <property type="entry name" value="33 KDA CHAPERONIN"/>
    <property type="match status" value="1"/>
</dbReference>
<dbReference type="Pfam" id="PF01430">
    <property type="entry name" value="HSP33"/>
    <property type="match status" value="1"/>
</dbReference>
<dbReference type="PIRSF" id="PIRSF005261">
    <property type="entry name" value="Heat_shock_Hsp33"/>
    <property type="match status" value="1"/>
</dbReference>
<dbReference type="SUPFAM" id="SSF64397">
    <property type="entry name" value="Hsp33 domain"/>
    <property type="match status" value="1"/>
</dbReference>
<dbReference type="SUPFAM" id="SSF118352">
    <property type="entry name" value="HSP33 redox switch-like"/>
    <property type="match status" value="1"/>
</dbReference>
<keyword id="KW-0143">Chaperone</keyword>
<keyword id="KW-0963">Cytoplasm</keyword>
<keyword id="KW-1015">Disulfide bond</keyword>
<keyword id="KW-0676">Redox-active center</keyword>
<keyword id="KW-1185">Reference proteome</keyword>
<keyword id="KW-0862">Zinc</keyword>
<proteinExistence type="inferred from homology"/>